<keyword id="KW-0156">Chromatin regulator</keyword>
<keyword id="KW-0963">Cytoplasm</keyword>
<keyword id="KW-0227">DNA damage</keyword>
<keyword id="KW-0479">Metal-binding</keyword>
<keyword id="KW-0539">Nucleus</keyword>
<keyword id="KW-1185">Reference proteome</keyword>
<keyword id="KW-0677">Repeat</keyword>
<keyword id="KW-0862">Zinc</keyword>
<keyword id="KW-0863">Zinc-finger</keyword>
<name>NTO1_SCHPO</name>
<proteinExistence type="evidence at protein level"/>
<dbReference type="EMBL" id="CU329671">
    <property type="protein sequence ID" value="CAA21075.1"/>
    <property type="molecule type" value="Genomic_DNA"/>
</dbReference>
<dbReference type="PIR" id="T39715">
    <property type="entry name" value="T39715"/>
</dbReference>
<dbReference type="RefSeq" id="NP_596378.1">
    <property type="nucleotide sequence ID" value="NM_001022299.2"/>
</dbReference>
<dbReference type="SMR" id="O74759"/>
<dbReference type="BioGRID" id="276615">
    <property type="interactions" value="69"/>
</dbReference>
<dbReference type="FunCoup" id="O74759">
    <property type="interactions" value="55"/>
</dbReference>
<dbReference type="STRING" id="284812.O74759"/>
<dbReference type="PaxDb" id="4896-SPBC17D11.04c.1"/>
<dbReference type="EnsemblFungi" id="SPBC17D11.04c.1">
    <property type="protein sequence ID" value="SPBC17D11.04c.1:pep"/>
    <property type="gene ID" value="SPBC17D11.04c"/>
</dbReference>
<dbReference type="GeneID" id="2540077"/>
<dbReference type="KEGG" id="spo:2540077"/>
<dbReference type="PomBase" id="SPBC17D11.04c">
    <property type="gene designation" value="nto1"/>
</dbReference>
<dbReference type="VEuPathDB" id="FungiDB:SPBC17D11.04c"/>
<dbReference type="eggNOG" id="KOG0955">
    <property type="taxonomic scope" value="Eukaryota"/>
</dbReference>
<dbReference type="HOGENOM" id="CLU_363352_0_0_1"/>
<dbReference type="InParanoid" id="O74759"/>
<dbReference type="PhylomeDB" id="O74759"/>
<dbReference type="Reactome" id="R-SPO-114608">
    <property type="pathway name" value="Platelet degranulation"/>
</dbReference>
<dbReference type="Reactome" id="R-SPO-3214847">
    <property type="pathway name" value="HATs acetylate histones"/>
</dbReference>
<dbReference type="Reactome" id="R-SPO-6804758">
    <property type="pathway name" value="Regulation of TP53 Activity through Acetylation"/>
</dbReference>
<dbReference type="PRO" id="PR:O74759"/>
<dbReference type="Proteomes" id="UP000002485">
    <property type="component" value="Chromosome II"/>
</dbReference>
<dbReference type="GO" id="GO:0005737">
    <property type="term" value="C:cytoplasm"/>
    <property type="evidence" value="ECO:0007005"/>
    <property type="project" value="PomBase"/>
</dbReference>
<dbReference type="GO" id="GO:0036410">
    <property type="term" value="C:Mst2 histone acetyltransferase complex"/>
    <property type="evidence" value="ECO:0000304"/>
    <property type="project" value="PomBase"/>
</dbReference>
<dbReference type="GO" id="GO:0033100">
    <property type="term" value="C:NuA3 histone acetyltransferase complex"/>
    <property type="evidence" value="ECO:0000266"/>
    <property type="project" value="PomBase"/>
</dbReference>
<dbReference type="GO" id="GO:0008270">
    <property type="term" value="F:zinc ion binding"/>
    <property type="evidence" value="ECO:0000255"/>
    <property type="project" value="PomBase"/>
</dbReference>
<dbReference type="GO" id="GO:0006338">
    <property type="term" value="P:chromatin remodeling"/>
    <property type="evidence" value="ECO:0000305"/>
    <property type="project" value="PomBase"/>
</dbReference>
<dbReference type="GO" id="GO:0006974">
    <property type="term" value="P:DNA damage response"/>
    <property type="evidence" value="ECO:0007669"/>
    <property type="project" value="UniProtKB-KW"/>
</dbReference>
<dbReference type="GO" id="GO:0006357">
    <property type="term" value="P:regulation of transcription by RNA polymerase II"/>
    <property type="evidence" value="ECO:0000318"/>
    <property type="project" value="GO_Central"/>
</dbReference>
<dbReference type="CDD" id="cd15492">
    <property type="entry name" value="PHD_BRPF_JADE_like"/>
    <property type="match status" value="1"/>
</dbReference>
<dbReference type="Gene3D" id="3.30.40.10">
    <property type="entry name" value="Zinc/RING finger domain, C3HC4 (zinc finger)"/>
    <property type="match status" value="2"/>
</dbReference>
<dbReference type="InterPro" id="IPR019542">
    <property type="entry name" value="Enhancer_polycomb-like_N"/>
</dbReference>
<dbReference type="InterPro" id="IPR034732">
    <property type="entry name" value="EPHD"/>
</dbReference>
<dbReference type="InterPro" id="IPR050701">
    <property type="entry name" value="Histone_Mod_Regulator"/>
</dbReference>
<dbReference type="InterPro" id="IPR011011">
    <property type="entry name" value="Znf_FYVE_PHD"/>
</dbReference>
<dbReference type="InterPro" id="IPR001965">
    <property type="entry name" value="Znf_PHD"/>
</dbReference>
<dbReference type="InterPro" id="IPR019787">
    <property type="entry name" value="Znf_PHD-finger"/>
</dbReference>
<dbReference type="InterPro" id="IPR013083">
    <property type="entry name" value="Znf_RING/FYVE/PHD"/>
</dbReference>
<dbReference type="PANTHER" id="PTHR13793:SF107">
    <property type="entry name" value="BROMODOMAIN-CONTAINING PROTEIN HOMOLOG"/>
    <property type="match status" value="1"/>
</dbReference>
<dbReference type="PANTHER" id="PTHR13793">
    <property type="entry name" value="PHD FINGER PROTEINS"/>
    <property type="match status" value="1"/>
</dbReference>
<dbReference type="Pfam" id="PF10513">
    <property type="entry name" value="EPL1"/>
    <property type="match status" value="1"/>
</dbReference>
<dbReference type="Pfam" id="PF13831">
    <property type="entry name" value="PHD_2"/>
    <property type="match status" value="1"/>
</dbReference>
<dbReference type="Pfam" id="PF13832">
    <property type="entry name" value="zf-HC5HC2H_2"/>
    <property type="match status" value="1"/>
</dbReference>
<dbReference type="SMART" id="SM00249">
    <property type="entry name" value="PHD"/>
    <property type="match status" value="2"/>
</dbReference>
<dbReference type="SUPFAM" id="SSF57903">
    <property type="entry name" value="FYVE/PHD zinc finger"/>
    <property type="match status" value="1"/>
</dbReference>
<dbReference type="PROSITE" id="PS51805">
    <property type="entry name" value="EPHD"/>
    <property type="match status" value="1"/>
</dbReference>
<dbReference type="PROSITE" id="PS01359">
    <property type="entry name" value="ZF_PHD_1"/>
    <property type="match status" value="1"/>
</dbReference>
<dbReference type="PROSITE" id="PS50016">
    <property type="entry name" value="ZF_PHD_2"/>
    <property type="match status" value="1"/>
</dbReference>
<evidence type="ECO:0000255" key="1">
    <source>
        <dbReference type="PROSITE-ProRule" id="PRU00146"/>
    </source>
</evidence>
<evidence type="ECO:0000255" key="2">
    <source>
        <dbReference type="PROSITE-ProRule" id="PRU01146"/>
    </source>
</evidence>
<evidence type="ECO:0000256" key="3">
    <source>
        <dbReference type="SAM" id="MobiDB-lite"/>
    </source>
</evidence>
<evidence type="ECO:0000269" key="4">
    <source>
    </source>
</evidence>
<evidence type="ECO:0000269" key="5">
    <source>
    </source>
</evidence>
<evidence type="ECO:0000305" key="6">
    <source>
    </source>
</evidence>
<reference key="1">
    <citation type="journal article" date="2002" name="Nature">
        <title>The genome sequence of Schizosaccharomyces pombe.</title>
        <authorList>
            <person name="Wood V."/>
            <person name="Gwilliam R."/>
            <person name="Rajandream M.A."/>
            <person name="Lyne M.H."/>
            <person name="Lyne R."/>
            <person name="Stewart A."/>
            <person name="Sgouros J.G."/>
            <person name="Peat N."/>
            <person name="Hayles J."/>
            <person name="Baker S.G."/>
            <person name="Basham D."/>
            <person name="Bowman S."/>
            <person name="Brooks K."/>
            <person name="Brown D."/>
            <person name="Brown S."/>
            <person name="Chillingworth T."/>
            <person name="Churcher C.M."/>
            <person name="Collins M."/>
            <person name="Connor R."/>
            <person name="Cronin A."/>
            <person name="Davis P."/>
            <person name="Feltwell T."/>
            <person name="Fraser A."/>
            <person name="Gentles S."/>
            <person name="Goble A."/>
            <person name="Hamlin N."/>
            <person name="Harris D.E."/>
            <person name="Hidalgo J."/>
            <person name="Hodgson G."/>
            <person name="Holroyd S."/>
            <person name="Hornsby T."/>
            <person name="Howarth S."/>
            <person name="Huckle E.J."/>
            <person name="Hunt S."/>
            <person name="Jagels K."/>
            <person name="James K.D."/>
            <person name="Jones L."/>
            <person name="Jones M."/>
            <person name="Leather S."/>
            <person name="McDonald S."/>
            <person name="McLean J."/>
            <person name="Mooney P."/>
            <person name="Moule S."/>
            <person name="Mungall K.L."/>
            <person name="Murphy L.D."/>
            <person name="Niblett D."/>
            <person name="Odell C."/>
            <person name="Oliver K."/>
            <person name="O'Neil S."/>
            <person name="Pearson D."/>
            <person name="Quail M.A."/>
            <person name="Rabbinowitsch E."/>
            <person name="Rutherford K.M."/>
            <person name="Rutter S."/>
            <person name="Saunders D."/>
            <person name="Seeger K."/>
            <person name="Sharp S."/>
            <person name="Skelton J."/>
            <person name="Simmonds M.N."/>
            <person name="Squares R."/>
            <person name="Squares S."/>
            <person name="Stevens K."/>
            <person name="Taylor K."/>
            <person name="Taylor R.G."/>
            <person name="Tivey A."/>
            <person name="Walsh S.V."/>
            <person name="Warren T."/>
            <person name="Whitehead S."/>
            <person name="Woodward J.R."/>
            <person name="Volckaert G."/>
            <person name="Aert R."/>
            <person name="Robben J."/>
            <person name="Grymonprez B."/>
            <person name="Weltjens I."/>
            <person name="Vanstreels E."/>
            <person name="Rieger M."/>
            <person name="Schaefer M."/>
            <person name="Mueller-Auer S."/>
            <person name="Gabel C."/>
            <person name="Fuchs M."/>
            <person name="Duesterhoeft A."/>
            <person name="Fritzc C."/>
            <person name="Holzer E."/>
            <person name="Moestl D."/>
            <person name="Hilbert H."/>
            <person name="Borzym K."/>
            <person name="Langer I."/>
            <person name="Beck A."/>
            <person name="Lehrach H."/>
            <person name="Reinhardt R."/>
            <person name="Pohl T.M."/>
            <person name="Eger P."/>
            <person name="Zimmermann W."/>
            <person name="Wedler H."/>
            <person name="Wambutt R."/>
            <person name="Purnelle B."/>
            <person name="Goffeau A."/>
            <person name="Cadieu E."/>
            <person name="Dreano S."/>
            <person name="Gloux S."/>
            <person name="Lelaure V."/>
            <person name="Mottier S."/>
            <person name="Galibert F."/>
            <person name="Aves S.J."/>
            <person name="Xiang Z."/>
            <person name="Hunt C."/>
            <person name="Moore K."/>
            <person name="Hurst S.M."/>
            <person name="Lucas M."/>
            <person name="Rochet M."/>
            <person name="Gaillardin C."/>
            <person name="Tallada V.A."/>
            <person name="Garzon A."/>
            <person name="Thode G."/>
            <person name="Daga R.R."/>
            <person name="Cruzado L."/>
            <person name="Jimenez J."/>
            <person name="Sanchez M."/>
            <person name="del Rey F."/>
            <person name="Benito J."/>
            <person name="Dominguez A."/>
            <person name="Revuelta J.L."/>
            <person name="Moreno S."/>
            <person name="Armstrong J."/>
            <person name="Forsburg S.L."/>
            <person name="Cerutti L."/>
            <person name="Lowe T."/>
            <person name="McCombie W.R."/>
            <person name="Paulsen I."/>
            <person name="Potashkin J."/>
            <person name="Shpakovski G.V."/>
            <person name="Ussery D."/>
            <person name="Barrell B.G."/>
            <person name="Nurse P."/>
        </authorList>
    </citation>
    <scope>NUCLEOTIDE SEQUENCE [LARGE SCALE GENOMIC DNA]</scope>
    <source>
        <strain>972 / ATCC 24843</strain>
    </source>
</reference>
<reference key="2">
    <citation type="journal article" date="2006" name="Nat. Biotechnol.">
        <title>ORFeome cloning and global analysis of protein localization in the fission yeast Schizosaccharomyces pombe.</title>
        <authorList>
            <person name="Matsuyama A."/>
            <person name="Arai R."/>
            <person name="Yashiroda Y."/>
            <person name="Shirai A."/>
            <person name="Kamata A."/>
            <person name="Sekido S."/>
            <person name="Kobayashi Y."/>
            <person name="Hashimoto A."/>
            <person name="Hamamoto M."/>
            <person name="Hiraoka Y."/>
            <person name="Horinouchi S."/>
            <person name="Yoshida M."/>
        </authorList>
    </citation>
    <scope>SUBCELLULAR LOCATION [LARGE SCALE ANALYSIS]</scope>
</reference>
<reference key="3">
    <citation type="journal article" date="2012" name="J. Biol. Chem.">
        <title>Histone H3 lysine 14 acetylation is required for activation of a DNA damage checkpoint in fission yeast.</title>
        <authorList>
            <person name="Wang Y."/>
            <person name="Kallgren S.P."/>
            <person name="Reddy B.D."/>
            <person name="Kuntz K."/>
            <person name="Lopez-Maury L."/>
            <person name="Thompson J."/>
            <person name="Watt S."/>
            <person name="Ma C."/>
            <person name="Hou H."/>
            <person name="Shi Y."/>
            <person name="Yates J.R. III"/>
            <person name="Bahler J."/>
            <person name="O'Connell M.J."/>
            <person name="Jia S."/>
        </authorList>
    </citation>
    <scope>IDENTIFICATION BY MASS SPECTROMETRY</scope>
    <scope>IDENTIFICATION IN THE MST2 COMPLEX</scope>
    <scope>FUNCTION</scope>
</reference>
<comment type="function">
    <text evidence="5">Component of the mst2 complex which is a highly specific H3 lysine 14 (H3K14) acetyltransferase that functions together with gcn5 to regulate global levels of H3K14 acetylation (H3K14ac), critical for DNA damage checkpoint activation.</text>
</comment>
<comment type="subunit">
    <text evidence="5">Component of the mst2 complex composed of at least eaf6, mst2, nto1, pdp3, ptf1, ptf2 and tfg3.</text>
</comment>
<comment type="subcellular location">
    <subcellularLocation>
        <location evidence="4">Cytoplasm</location>
    </subcellularLocation>
    <subcellularLocation>
        <location evidence="6">Nucleus</location>
    </subcellularLocation>
</comment>
<sequence>MQTFRLTSTGRNILRPDELAFQPREEIPYKSFHPDLQIDEPLEILEGDHTQYAGLRDSLVTYKSENSYVLKALLNAKIENVKPVGVQTENINPQEKKFGYKTAKQLDWSPDEYFKFVAIHPYSKTSFPVSYDLDELDTMWLTYYNEFQLSSNSEWENVSKEFLEIVLTIIEREWLYLEAWMPKIEPVRVEDELDGRCVICNEAECENSNAIVFCDNCNTSVHQNCYGIPFVPEGQWFCKKCLLAPHEVICCAFCPDRDGAFCTTLDGRWCHTICAIAIPEISFHDTSRLDLVRNIASIPKSRWKLVCCICKLRWGTCVQCSDKNCYAAYHITCARRAGFFYKIYSHSASYDSVDMETYCDKHTPPDYLNGLMKRLFPLAELYYKRMATDVPLNFQATKAPDFVPEGPWKSHPLPAFIVDKVTKVLLSYNVKRQDLPSIVTDICKFYHMKRRSRKDAPLLKSQLLMDSLENLPVRASKDRVRSLEVAKALQDQYQSLLTLVESTAKRQLLKCQLSNLRKKFLNLNYFPAQRLLQDTLVKIIDLDVDGLFNMPLDNGWIGWVELKRQVFSYQIGSISSLEKKLEPIWDVDGVIQCIDDMEQLTAMVQFAQKTEGEVKKLFIKAKIYFESLSLDERGNLKVPSLGINGLEYDNWPGLNELEMSQLDIPSQGNLKSLHDFIEGLDLNEKIGKFPISMFQNQVAQFSTIEIPKMSGRANGMHNFHSEDVTGQSNHALPNSVTKKNGTKQPYTKNSLPFNERITRSKAKKNYS</sequence>
<feature type="chain" id="PRO_0000303918" description="Mst2 complex subunit nto1">
    <location>
        <begin position="1"/>
        <end position="767"/>
    </location>
</feature>
<feature type="zinc finger region" description="PHD-type 1" evidence="1">
    <location>
        <begin position="194"/>
        <end position="244"/>
    </location>
</feature>
<feature type="zinc finger region" description="C2HC pre-PHD-type" evidence="2">
    <location>
        <begin position="248"/>
        <end position="281"/>
    </location>
</feature>
<feature type="zinc finger region" description="PHD-type 2" evidence="2">
    <location>
        <begin position="305"/>
        <end position="363"/>
    </location>
</feature>
<feature type="region of interest" description="Disordered" evidence="3">
    <location>
        <begin position="724"/>
        <end position="767"/>
    </location>
</feature>
<feature type="compositionally biased region" description="Polar residues" evidence="3">
    <location>
        <begin position="724"/>
        <end position="752"/>
    </location>
</feature>
<gene>
    <name type="primary">nto1</name>
    <name type="ORF">SPBC17D11.04c</name>
</gene>
<accession>O74759</accession>
<organism>
    <name type="scientific">Schizosaccharomyces pombe (strain 972 / ATCC 24843)</name>
    <name type="common">Fission yeast</name>
    <dbReference type="NCBI Taxonomy" id="284812"/>
    <lineage>
        <taxon>Eukaryota</taxon>
        <taxon>Fungi</taxon>
        <taxon>Dikarya</taxon>
        <taxon>Ascomycota</taxon>
        <taxon>Taphrinomycotina</taxon>
        <taxon>Schizosaccharomycetes</taxon>
        <taxon>Schizosaccharomycetales</taxon>
        <taxon>Schizosaccharomycetaceae</taxon>
        <taxon>Schizosaccharomyces</taxon>
    </lineage>
</organism>
<protein>
    <recommendedName>
        <fullName>Mst2 complex subunit nto1</fullName>
    </recommendedName>
</protein>